<gene>
    <name type="ORF">PRO0255</name>
</gene>
<evidence type="ECO:0000256" key="1">
    <source>
        <dbReference type="SAM" id="MobiDB-lite"/>
    </source>
</evidence>
<evidence type="ECO:0000305" key="2"/>
<sequence length="69" mass="8249">MGMALELYWLCGFRSYWPLGTNAENEGNRKENRRQMQSRNERGCNVRQTKTYRDREADRHIHGIACLLF</sequence>
<comment type="caution">
    <text evidence="2">Could be the product of a pseudogene.</text>
</comment>
<reference key="1">
    <citation type="submission" date="1998-09" db="EMBL/GenBank/DDBJ databases">
        <title>Functional prediction of the coding sequences of 50 new genes deduced by analysis of cDNA clones from human fetal liver.</title>
        <authorList>
            <person name="Yu Y."/>
            <person name="Zhang C."/>
            <person name="Luo L."/>
            <person name="Ouyang S."/>
            <person name="Zhang S."/>
            <person name="Li W."/>
            <person name="Wu J."/>
            <person name="Zhou S."/>
            <person name="Liu M."/>
            <person name="He F."/>
        </authorList>
    </citation>
    <scope>NUCLEOTIDE SEQUENCE [LARGE SCALE MRNA]</scope>
    <source>
        <tissue>Fetal liver</tissue>
    </source>
</reference>
<reference key="2">
    <citation type="submission" date="2005-07" db="EMBL/GenBank/DDBJ databases">
        <authorList>
            <person name="Mural R.J."/>
            <person name="Istrail S."/>
            <person name="Sutton G.G."/>
            <person name="Florea L."/>
            <person name="Halpern A.L."/>
            <person name="Mobarry C.M."/>
            <person name="Lippert R."/>
            <person name="Walenz B."/>
            <person name="Shatkay H."/>
            <person name="Dew I."/>
            <person name="Miller J.R."/>
            <person name="Flanigan M.J."/>
            <person name="Edwards N.J."/>
            <person name="Bolanos R."/>
            <person name="Fasulo D."/>
            <person name="Halldorsson B.V."/>
            <person name="Hannenhalli S."/>
            <person name="Turner R."/>
            <person name="Yooseph S."/>
            <person name="Lu F."/>
            <person name="Nusskern D.R."/>
            <person name="Shue B.C."/>
            <person name="Zheng X.H."/>
            <person name="Zhong F."/>
            <person name="Delcher A.L."/>
            <person name="Huson D.H."/>
            <person name="Kravitz S.A."/>
            <person name="Mouchard L."/>
            <person name="Reinert K."/>
            <person name="Remington K.A."/>
            <person name="Clark A.G."/>
            <person name="Waterman M.S."/>
            <person name="Eichler E.E."/>
            <person name="Adams M.D."/>
            <person name="Hunkapiller M.W."/>
            <person name="Myers E.W."/>
            <person name="Venter J.C."/>
        </authorList>
    </citation>
    <scope>NUCLEOTIDE SEQUENCE [LARGE SCALE GENOMIC DNA]</scope>
</reference>
<dbReference type="EMBL" id="AF090909">
    <property type="protein sequence ID" value="AAF24032.1"/>
    <property type="molecule type" value="mRNA"/>
</dbReference>
<dbReference type="EMBL" id="CH471118">
    <property type="protein sequence ID" value="EAX10783.1"/>
    <property type="molecule type" value="Genomic_DNA"/>
</dbReference>
<dbReference type="BioMuta" id="PRO0255"/>
<dbReference type="neXtProt" id="NX_Q9UI72"/>
<dbReference type="InParanoid" id="Q9UI72"/>
<dbReference type="PAN-GO" id="Q9UI72">
    <property type="GO annotations" value="0 GO annotations based on evolutionary models"/>
</dbReference>
<dbReference type="Pharos" id="Q9UI72">
    <property type="development level" value="Tdark"/>
</dbReference>
<dbReference type="Proteomes" id="UP000005640">
    <property type="component" value="Unplaced"/>
</dbReference>
<dbReference type="RNAct" id="Q9UI72">
    <property type="molecule type" value="protein"/>
</dbReference>
<accession>Q9UI72</accession>
<protein>
    <recommendedName>
        <fullName>Putative uncharacterized protein PRO0255</fullName>
    </recommendedName>
</protein>
<organism>
    <name type="scientific">Homo sapiens</name>
    <name type="common">Human</name>
    <dbReference type="NCBI Taxonomy" id="9606"/>
    <lineage>
        <taxon>Eukaryota</taxon>
        <taxon>Metazoa</taxon>
        <taxon>Chordata</taxon>
        <taxon>Craniata</taxon>
        <taxon>Vertebrata</taxon>
        <taxon>Euteleostomi</taxon>
        <taxon>Mammalia</taxon>
        <taxon>Eutheria</taxon>
        <taxon>Euarchontoglires</taxon>
        <taxon>Primates</taxon>
        <taxon>Haplorrhini</taxon>
        <taxon>Catarrhini</taxon>
        <taxon>Hominidae</taxon>
        <taxon>Homo</taxon>
    </lineage>
</organism>
<name>YE014_HUMAN</name>
<proteinExistence type="uncertain"/>
<keyword id="KW-1185">Reference proteome</keyword>
<feature type="chain" id="PRO_0000332146" description="Putative uncharacterized protein PRO0255">
    <location>
        <begin position="1"/>
        <end position="69"/>
    </location>
</feature>
<feature type="region of interest" description="Disordered" evidence="1">
    <location>
        <begin position="23"/>
        <end position="46"/>
    </location>
</feature>
<feature type="compositionally biased region" description="Basic and acidic residues" evidence="1">
    <location>
        <begin position="26"/>
        <end position="44"/>
    </location>
</feature>